<comment type="function">
    <text evidence="1">DNA ligase that catalyzes the formation of phosphodiester linkages between 5'-phosphoryl and 3'-hydroxyl groups in double-stranded DNA using NAD as a coenzyme and as the energy source for the reaction. It is essential for DNA replication and repair of damaged DNA.</text>
</comment>
<comment type="catalytic activity">
    <reaction evidence="1">
        <text>NAD(+) + (deoxyribonucleotide)n-3'-hydroxyl + 5'-phospho-(deoxyribonucleotide)m = (deoxyribonucleotide)n+m + AMP + beta-nicotinamide D-nucleotide.</text>
        <dbReference type="EC" id="6.5.1.2"/>
    </reaction>
</comment>
<comment type="cofactor">
    <cofactor evidence="1">
        <name>Mg(2+)</name>
        <dbReference type="ChEBI" id="CHEBI:18420"/>
    </cofactor>
    <cofactor evidence="1">
        <name>Mn(2+)</name>
        <dbReference type="ChEBI" id="CHEBI:29035"/>
    </cofactor>
</comment>
<comment type="similarity">
    <text evidence="1">Belongs to the NAD-dependent DNA ligase family. LigA subfamily.</text>
</comment>
<keyword id="KW-0227">DNA damage</keyword>
<keyword id="KW-0234">DNA repair</keyword>
<keyword id="KW-0235">DNA replication</keyword>
<keyword id="KW-0436">Ligase</keyword>
<keyword id="KW-0460">Magnesium</keyword>
<keyword id="KW-0464">Manganese</keyword>
<keyword id="KW-0479">Metal-binding</keyword>
<keyword id="KW-0520">NAD</keyword>
<keyword id="KW-1185">Reference proteome</keyword>
<keyword id="KW-0862">Zinc</keyword>
<dbReference type="EC" id="6.5.1.2" evidence="1"/>
<dbReference type="EMBL" id="AP009247">
    <property type="protein sequence ID" value="BAF61395.1"/>
    <property type="molecule type" value="Genomic_DNA"/>
</dbReference>
<dbReference type="RefSeq" id="WP_011929665.1">
    <property type="nucleotide sequence ID" value="NC_009465.1"/>
</dbReference>
<dbReference type="SMR" id="A5CXB8"/>
<dbReference type="STRING" id="412965.COSY_0266"/>
<dbReference type="KEGG" id="vok:COSY_0266"/>
<dbReference type="eggNOG" id="COG0272">
    <property type="taxonomic scope" value="Bacteria"/>
</dbReference>
<dbReference type="HOGENOM" id="CLU_007764_2_0_6"/>
<dbReference type="OrthoDB" id="9759736at2"/>
<dbReference type="Proteomes" id="UP000000247">
    <property type="component" value="Chromosome"/>
</dbReference>
<dbReference type="GO" id="GO:0003911">
    <property type="term" value="F:DNA ligase (NAD+) activity"/>
    <property type="evidence" value="ECO:0007669"/>
    <property type="project" value="UniProtKB-UniRule"/>
</dbReference>
<dbReference type="GO" id="GO:0046872">
    <property type="term" value="F:metal ion binding"/>
    <property type="evidence" value="ECO:0007669"/>
    <property type="project" value="UniProtKB-KW"/>
</dbReference>
<dbReference type="GO" id="GO:0006281">
    <property type="term" value="P:DNA repair"/>
    <property type="evidence" value="ECO:0007669"/>
    <property type="project" value="UniProtKB-KW"/>
</dbReference>
<dbReference type="GO" id="GO:0006260">
    <property type="term" value="P:DNA replication"/>
    <property type="evidence" value="ECO:0007669"/>
    <property type="project" value="UniProtKB-KW"/>
</dbReference>
<dbReference type="CDD" id="cd17748">
    <property type="entry name" value="BRCT_DNA_ligase_like"/>
    <property type="match status" value="1"/>
</dbReference>
<dbReference type="Gene3D" id="3.30.1490.70">
    <property type="match status" value="1"/>
</dbReference>
<dbReference type="Gene3D" id="1.10.150.20">
    <property type="entry name" value="5' to 3' exonuclease, C-terminal subdomain"/>
    <property type="match status" value="1"/>
</dbReference>
<dbReference type="Gene3D" id="3.40.50.10190">
    <property type="entry name" value="BRCT domain"/>
    <property type="match status" value="1"/>
</dbReference>
<dbReference type="Gene3D" id="3.30.470.30">
    <property type="entry name" value="DNA ligase/mRNA capping enzyme"/>
    <property type="match status" value="1"/>
</dbReference>
<dbReference type="Gene3D" id="2.40.50.140">
    <property type="entry name" value="Nucleic acid-binding proteins"/>
    <property type="match status" value="1"/>
</dbReference>
<dbReference type="HAMAP" id="MF_01588">
    <property type="entry name" value="DNA_ligase_A"/>
    <property type="match status" value="1"/>
</dbReference>
<dbReference type="InterPro" id="IPR001357">
    <property type="entry name" value="BRCT_dom"/>
</dbReference>
<dbReference type="InterPro" id="IPR036420">
    <property type="entry name" value="BRCT_dom_sf"/>
</dbReference>
<dbReference type="InterPro" id="IPR001679">
    <property type="entry name" value="DNA_ligase"/>
</dbReference>
<dbReference type="InterPro" id="IPR013840">
    <property type="entry name" value="DNAligase_N"/>
</dbReference>
<dbReference type="InterPro" id="IPR012340">
    <property type="entry name" value="NA-bd_OB-fold"/>
</dbReference>
<dbReference type="InterPro" id="IPR004150">
    <property type="entry name" value="NAD_DNA_ligase_OB"/>
</dbReference>
<dbReference type="InterPro" id="IPR010994">
    <property type="entry name" value="RuvA_2-like"/>
</dbReference>
<dbReference type="Pfam" id="PF00533">
    <property type="entry name" value="BRCT"/>
    <property type="match status" value="1"/>
</dbReference>
<dbReference type="Pfam" id="PF03120">
    <property type="entry name" value="DNA_ligase_OB"/>
    <property type="match status" value="1"/>
</dbReference>
<dbReference type="Pfam" id="PF14520">
    <property type="entry name" value="HHH_5"/>
    <property type="match status" value="1"/>
</dbReference>
<dbReference type="PIRSF" id="PIRSF001604">
    <property type="entry name" value="LigA"/>
    <property type="match status" value="1"/>
</dbReference>
<dbReference type="SMART" id="SM00532">
    <property type="entry name" value="LIGANc"/>
    <property type="match status" value="1"/>
</dbReference>
<dbReference type="SUPFAM" id="SSF52113">
    <property type="entry name" value="BRCT domain"/>
    <property type="match status" value="1"/>
</dbReference>
<dbReference type="SUPFAM" id="SSF56091">
    <property type="entry name" value="DNA ligase/mRNA capping enzyme, catalytic domain"/>
    <property type="match status" value="1"/>
</dbReference>
<dbReference type="SUPFAM" id="SSF50249">
    <property type="entry name" value="Nucleic acid-binding proteins"/>
    <property type="match status" value="1"/>
</dbReference>
<dbReference type="SUPFAM" id="SSF47781">
    <property type="entry name" value="RuvA domain 2-like"/>
    <property type="match status" value="1"/>
</dbReference>
<proteinExistence type="inferred from homology"/>
<feature type="chain" id="PRO_0000313503" description="DNA ligase">
    <location>
        <begin position="1"/>
        <end position="632"/>
    </location>
</feature>
<feature type="domain" description="BRCT" evidence="1">
    <location>
        <begin position="561"/>
        <end position="632"/>
    </location>
</feature>
<feature type="active site" description="N6-AMP-lysine intermediate" evidence="1">
    <location>
        <position position="127"/>
    </location>
</feature>
<feature type="binding site" evidence="1">
    <location>
        <begin position="45"/>
        <end position="49"/>
    </location>
    <ligand>
        <name>NAD(+)</name>
        <dbReference type="ChEBI" id="CHEBI:57540"/>
    </ligand>
</feature>
<feature type="binding site" evidence="1">
    <location>
        <begin position="89"/>
        <end position="90"/>
    </location>
    <ligand>
        <name>NAD(+)</name>
        <dbReference type="ChEBI" id="CHEBI:57540"/>
    </ligand>
</feature>
<feature type="binding site" evidence="1">
    <location>
        <position position="143"/>
    </location>
    <ligand>
        <name>NAD(+)</name>
        <dbReference type="ChEBI" id="CHEBI:57540"/>
    </ligand>
</feature>
<feature type="binding site" evidence="1">
    <location>
        <position position="174"/>
    </location>
    <ligand>
        <name>NAD(+)</name>
        <dbReference type="ChEBI" id="CHEBI:57540"/>
    </ligand>
</feature>
<feature type="binding site" evidence="1">
    <location>
        <position position="286"/>
    </location>
    <ligand>
        <name>NAD(+)</name>
        <dbReference type="ChEBI" id="CHEBI:57540"/>
    </ligand>
</feature>
<feature type="binding site" evidence="1">
    <location>
        <position position="374"/>
    </location>
    <ligand>
        <name>Zn(2+)</name>
        <dbReference type="ChEBI" id="CHEBI:29105"/>
    </ligand>
</feature>
<feature type="binding site" evidence="1">
    <location>
        <position position="377"/>
    </location>
    <ligand>
        <name>Zn(2+)</name>
        <dbReference type="ChEBI" id="CHEBI:29105"/>
    </ligand>
</feature>
<feature type="binding site" evidence="1">
    <location>
        <position position="390"/>
    </location>
    <ligand>
        <name>Zn(2+)</name>
        <dbReference type="ChEBI" id="CHEBI:29105"/>
    </ligand>
</feature>
<feature type="binding site" evidence="1">
    <location>
        <position position="396"/>
    </location>
    <ligand>
        <name>Zn(2+)</name>
        <dbReference type="ChEBI" id="CHEBI:29105"/>
    </ligand>
</feature>
<sequence length="632" mass="71179">MLSQNIIDKIIRQDILVDELLDEELSIFCQTANLAYRSGKPIISNEDYDFIYLATLKNKEPNNPLFKSIEPEGRAFAEEKVLLPELMLSIDKAYSWNEMSKWIERLEKSGMLIGLDLNAIQIKATPKLDGFAGFDDGNRLYTRGDGKKGSDISRVFKRGLCVFKDSGRGLGAGEIVVKKSYFEKYLVHSFEYPRNFQSSLIKEKALDEQAQKAIIDKGALFVPFIKLPIWSGSMTELVAKFEEIVSQVLVMVDFDVDGVVFEVINIDLKTQMGANRKFHRWQIAFKENKDIVQVKVLNVMPQVGRSGKITPVAEVEPTLLSGATIVRVTGHHYGLVKEQGLGIGSVVELTRSGLVIPKIISVLKPMPVDIPDNCLSCGMPLVWESDFLVCVNHKNCPAQIIGRITYFFKVLANNDGFGIATVEKLYAHNIRSVSQIYTLNVERLMAIGFGEKTSINLISQLSRSISEKIEDWRFLAAFGMHRMGLGNCENLLKSYRLNDIFDLTLEQITNIDGFAELTAQVIVQGLVSIVDEYNQIYQYNFNLDTTVFTKDLQTLMHELFDKRIVFTGKMNCPRNEMKKHAKLVGIKVSTTISTKIDYLVIGSRVGQKKIQNAEKLGVVVMTEADYLSKITM</sequence>
<accession>A5CXB8</accession>
<gene>
    <name evidence="1" type="primary">ligA</name>
    <name type="ordered locus">COSY_0266</name>
</gene>
<evidence type="ECO:0000255" key="1">
    <source>
        <dbReference type="HAMAP-Rule" id="MF_01588"/>
    </source>
</evidence>
<organism>
    <name type="scientific">Vesicomyosocius okutanii subsp. Calyptogena okutanii (strain HA)</name>
    <dbReference type="NCBI Taxonomy" id="412965"/>
    <lineage>
        <taxon>Bacteria</taxon>
        <taxon>Pseudomonadati</taxon>
        <taxon>Pseudomonadota</taxon>
        <taxon>Gammaproteobacteria</taxon>
        <taxon>Candidatus Pseudothioglobaceae</taxon>
        <taxon>Candidatus Vesicomyosocius</taxon>
    </lineage>
</organism>
<protein>
    <recommendedName>
        <fullName evidence="1">DNA ligase</fullName>
        <ecNumber evidence="1">6.5.1.2</ecNumber>
    </recommendedName>
    <alternativeName>
        <fullName evidence="1">Polydeoxyribonucleotide synthase [NAD(+)]</fullName>
    </alternativeName>
</protein>
<reference key="1">
    <citation type="journal article" date="2007" name="Curr. Biol.">
        <title>Reduced genome of the thioautotrophic intracellular symbiont in a deep-sea clam, Calyptogena okutanii.</title>
        <authorList>
            <person name="Kuwahara H."/>
            <person name="Yoshida T."/>
            <person name="Takaki Y."/>
            <person name="Shimamura S."/>
            <person name="Nishi S."/>
            <person name="Harada M."/>
            <person name="Matsuyama K."/>
            <person name="Takishita K."/>
            <person name="Kawato M."/>
            <person name="Uematsu K."/>
            <person name="Fujiwara Y."/>
            <person name="Sato T."/>
            <person name="Kato C."/>
            <person name="Kitagawa M."/>
            <person name="Kato I."/>
            <person name="Maruyama T."/>
        </authorList>
    </citation>
    <scope>NUCLEOTIDE SEQUENCE [LARGE SCALE GENOMIC DNA]</scope>
    <source>
        <strain>HA</strain>
    </source>
</reference>
<name>DNLJ_VESOH</name>